<evidence type="ECO:0000250" key="1"/>
<evidence type="ECO:0000255" key="2">
    <source>
        <dbReference type="HAMAP-Rule" id="MF_00403"/>
    </source>
</evidence>
<evidence type="ECO:0000256" key="3">
    <source>
        <dbReference type="SAM" id="MobiDB-lite"/>
    </source>
</evidence>
<evidence type="ECO:0000305" key="4"/>
<sequence>MATINQLVRQPRKRIVEKSDVPALQNCPQRRGVCTRVYTTTPKKPNSALRKVCRVRLTNGFEVSSYIGGEGHNLQEHSVVLIRGGRVKDLPGVRYHTVRGSLDTSGVKGRNQGRSKYGTKKPK</sequence>
<keyword id="KW-0488">Methylation</keyword>
<keyword id="KW-0687">Ribonucleoprotein</keyword>
<keyword id="KW-0689">Ribosomal protein</keyword>
<keyword id="KW-0694">RNA-binding</keyword>
<keyword id="KW-0699">rRNA-binding</keyword>
<keyword id="KW-0820">tRNA-binding</keyword>
<feature type="chain" id="PRO_0000226406" description="Small ribosomal subunit protein uS12">
    <location>
        <begin position="1"/>
        <end position="123"/>
    </location>
</feature>
<feature type="region of interest" description="Disordered" evidence="3">
    <location>
        <begin position="100"/>
        <end position="123"/>
    </location>
</feature>
<feature type="compositionally biased region" description="Basic residues" evidence="3">
    <location>
        <begin position="111"/>
        <end position="123"/>
    </location>
</feature>
<feature type="modified residue" description="3-methylthioaspartic acid" evidence="1">
    <location>
        <position position="89"/>
    </location>
</feature>
<proteinExistence type="inferred from homology"/>
<dbReference type="EMBL" id="CP000058">
    <property type="protein sequence ID" value="AAZ34198.1"/>
    <property type="molecule type" value="Genomic_DNA"/>
</dbReference>
<dbReference type="RefSeq" id="WP_002555494.1">
    <property type="nucleotide sequence ID" value="NC_005773.3"/>
</dbReference>
<dbReference type="SMR" id="Q48D31"/>
<dbReference type="GeneID" id="97919457"/>
<dbReference type="KEGG" id="psp:PSPPH_4597"/>
<dbReference type="eggNOG" id="COG0048">
    <property type="taxonomic scope" value="Bacteria"/>
</dbReference>
<dbReference type="HOGENOM" id="CLU_104295_1_2_6"/>
<dbReference type="Proteomes" id="UP000000551">
    <property type="component" value="Chromosome"/>
</dbReference>
<dbReference type="GO" id="GO:0015935">
    <property type="term" value="C:small ribosomal subunit"/>
    <property type="evidence" value="ECO:0007669"/>
    <property type="project" value="InterPro"/>
</dbReference>
<dbReference type="GO" id="GO:0019843">
    <property type="term" value="F:rRNA binding"/>
    <property type="evidence" value="ECO:0007669"/>
    <property type="project" value="UniProtKB-UniRule"/>
</dbReference>
<dbReference type="GO" id="GO:0003735">
    <property type="term" value="F:structural constituent of ribosome"/>
    <property type="evidence" value="ECO:0007669"/>
    <property type="project" value="InterPro"/>
</dbReference>
<dbReference type="GO" id="GO:0000049">
    <property type="term" value="F:tRNA binding"/>
    <property type="evidence" value="ECO:0007669"/>
    <property type="project" value="UniProtKB-UniRule"/>
</dbReference>
<dbReference type="GO" id="GO:0006412">
    <property type="term" value="P:translation"/>
    <property type="evidence" value="ECO:0007669"/>
    <property type="project" value="UniProtKB-UniRule"/>
</dbReference>
<dbReference type="CDD" id="cd03368">
    <property type="entry name" value="Ribosomal_S12"/>
    <property type="match status" value="1"/>
</dbReference>
<dbReference type="FunFam" id="2.40.50.140:FF:000001">
    <property type="entry name" value="30S ribosomal protein S12"/>
    <property type="match status" value="1"/>
</dbReference>
<dbReference type="Gene3D" id="2.40.50.140">
    <property type="entry name" value="Nucleic acid-binding proteins"/>
    <property type="match status" value="1"/>
</dbReference>
<dbReference type="HAMAP" id="MF_00403_B">
    <property type="entry name" value="Ribosomal_uS12_B"/>
    <property type="match status" value="1"/>
</dbReference>
<dbReference type="InterPro" id="IPR012340">
    <property type="entry name" value="NA-bd_OB-fold"/>
</dbReference>
<dbReference type="InterPro" id="IPR006032">
    <property type="entry name" value="Ribosomal_uS12"/>
</dbReference>
<dbReference type="InterPro" id="IPR005679">
    <property type="entry name" value="Ribosomal_uS12_bac"/>
</dbReference>
<dbReference type="NCBIfam" id="TIGR00981">
    <property type="entry name" value="rpsL_bact"/>
    <property type="match status" value="1"/>
</dbReference>
<dbReference type="PANTHER" id="PTHR11652">
    <property type="entry name" value="30S RIBOSOMAL PROTEIN S12 FAMILY MEMBER"/>
    <property type="match status" value="1"/>
</dbReference>
<dbReference type="Pfam" id="PF00164">
    <property type="entry name" value="Ribosom_S12_S23"/>
    <property type="match status" value="1"/>
</dbReference>
<dbReference type="PIRSF" id="PIRSF002133">
    <property type="entry name" value="Ribosomal_S12/S23"/>
    <property type="match status" value="1"/>
</dbReference>
<dbReference type="PRINTS" id="PR01034">
    <property type="entry name" value="RIBOSOMALS12"/>
</dbReference>
<dbReference type="SUPFAM" id="SSF50249">
    <property type="entry name" value="Nucleic acid-binding proteins"/>
    <property type="match status" value="1"/>
</dbReference>
<dbReference type="PROSITE" id="PS00055">
    <property type="entry name" value="RIBOSOMAL_S12"/>
    <property type="match status" value="1"/>
</dbReference>
<comment type="function">
    <text evidence="2">With S4 and S5 plays an important role in translational accuracy.</text>
</comment>
<comment type="function">
    <text evidence="2">Interacts with and stabilizes bases of the 16S rRNA that are involved in tRNA selection in the A site and with the mRNA backbone. Located at the interface of the 30S and 50S subunits, it traverses the body of the 30S subunit contacting proteins on the other side and probably holding the rRNA structure together. The combined cluster of proteins S8, S12 and S17 appears to hold together the shoulder and platform of the 30S subunit.</text>
</comment>
<comment type="subunit">
    <text evidence="2">Part of the 30S ribosomal subunit. Contacts proteins S8 and S17. May interact with IF1 in the 30S initiation complex.</text>
</comment>
<comment type="similarity">
    <text evidence="2">Belongs to the universal ribosomal protein uS12 family.</text>
</comment>
<reference key="1">
    <citation type="journal article" date="2005" name="J. Bacteriol.">
        <title>Whole-genome sequence analysis of Pseudomonas syringae pv. phaseolicola 1448A reveals divergence among pathovars in genes involved in virulence and transposition.</title>
        <authorList>
            <person name="Joardar V."/>
            <person name="Lindeberg M."/>
            <person name="Jackson R.W."/>
            <person name="Selengut J."/>
            <person name="Dodson R."/>
            <person name="Brinkac L.M."/>
            <person name="Daugherty S.C."/>
            <person name="DeBoy R.T."/>
            <person name="Durkin A.S."/>
            <person name="Gwinn Giglio M."/>
            <person name="Madupu R."/>
            <person name="Nelson W.C."/>
            <person name="Rosovitz M.J."/>
            <person name="Sullivan S.A."/>
            <person name="Crabtree J."/>
            <person name="Creasy T."/>
            <person name="Davidsen T.M."/>
            <person name="Haft D.H."/>
            <person name="Zafar N."/>
            <person name="Zhou L."/>
            <person name="Halpin R."/>
            <person name="Holley T."/>
            <person name="Khouri H.M."/>
            <person name="Feldblyum T.V."/>
            <person name="White O."/>
            <person name="Fraser C.M."/>
            <person name="Chatterjee A.K."/>
            <person name="Cartinhour S."/>
            <person name="Schneider D."/>
            <person name="Mansfield J.W."/>
            <person name="Collmer A."/>
            <person name="Buell R."/>
        </authorList>
    </citation>
    <scope>NUCLEOTIDE SEQUENCE [LARGE SCALE GENOMIC DNA]</scope>
    <source>
        <strain>1448A / Race 6</strain>
    </source>
</reference>
<accession>Q48D31</accession>
<name>RS12_PSE14</name>
<protein>
    <recommendedName>
        <fullName evidence="2">Small ribosomal subunit protein uS12</fullName>
    </recommendedName>
    <alternativeName>
        <fullName evidence="4">30S ribosomal protein S12</fullName>
    </alternativeName>
</protein>
<organism>
    <name type="scientific">Pseudomonas savastanoi pv. phaseolicola (strain 1448A / Race 6)</name>
    <name type="common">Pseudomonas syringae pv. phaseolicola (strain 1448A / Race 6)</name>
    <dbReference type="NCBI Taxonomy" id="264730"/>
    <lineage>
        <taxon>Bacteria</taxon>
        <taxon>Pseudomonadati</taxon>
        <taxon>Pseudomonadota</taxon>
        <taxon>Gammaproteobacteria</taxon>
        <taxon>Pseudomonadales</taxon>
        <taxon>Pseudomonadaceae</taxon>
        <taxon>Pseudomonas</taxon>
    </lineage>
</organism>
<gene>
    <name evidence="2" type="primary">rpsL</name>
    <name type="ordered locus">PSPPH_4597</name>
</gene>